<dbReference type="EMBL" id="CU329672">
    <property type="protein sequence ID" value="CAB41224.1"/>
    <property type="molecule type" value="Genomic_DNA"/>
</dbReference>
<dbReference type="PIR" id="T41184">
    <property type="entry name" value="T41184"/>
</dbReference>
<dbReference type="RefSeq" id="NP_588208.1">
    <property type="nucleotide sequence ID" value="NM_001023198.2"/>
</dbReference>
<dbReference type="SMR" id="Q10430"/>
<dbReference type="BioGRID" id="275771">
    <property type="interactions" value="6"/>
</dbReference>
<dbReference type="ComplexPortal" id="CPX-549">
    <property type="entry name" value="Ndc80 complex"/>
</dbReference>
<dbReference type="FunCoup" id="Q10430">
    <property type="interactions" value="143"/>
</dbReference>
<dbReference type="IntAct" id="Q10430">
    <property type="interactions" value="2"/>
</dbReference>
<dbReference type="STRING" id="284812.Q10430"/>
<dbReference type="iPTMnet" id="Q10430"/>
<dbReference type="PaxDb" id="4896-SPCC188.04c.1"/>
<dbReference type="EnsemblFungi" id="SPCC188.04c.1">
    <property type="protein sequence ID" value="SPCC188.04c.1:pep"/>
    <property type="gene ID" value="SPCC188.04c"/>
</dbReference>
<dbReference type="GeneID" id="2539200"/>
<dbReference type="KEGG" id="spo:2539200"/>
<dbReference type="PomBase" id="SPCC188.04c">
    <property type="gene designation" value="spc25"/>
</dbReference>
<dbReference type="VEuPathDB" id="FungiDB:SPCC188.04c"/>
<dbReference type="eggNOG" id="KOG4657">
    <property type="taxonomic scope" value="Eukaryota"/>
</dbReference>
<dbReference type="HOGENOM" id="CLU_065188_0_0_1"/>
<dbReference type="InParanoid" id="Q10430"/>
<dbReference type="OMA" id="HEDQRMK"/>
<dbReference type="PhylomeDB" id="Q10430"/>
<dbReference type="CD-CODE" id="576F0A76">
    <property type="entry name" value="Centrosome"/>
</dbReference>
<dbReference type="PRO" id="PR:Q10430"/>
<dbReference type="Proteomes" id="UP000002485">
    <property type="component" value="Chromosome III"/>
</dbReference>
<dbReference type="GO" id="GO:0000779">
    <property type="term" value="C:condensed chromosome, centromeric region"/>
    <property type="evidence" value="ECO:0000314"/>
    <property type="project" value="PomBase"/>
</dbReference>
<dbReference type="GO" id="GO:0000776">
    <property type="term" value="C:kinetochore"/>
    <property type="evidence" value="ECO:0000314"/>
    <property type="project" value="PomBase"/>
</dbReference>
<dbReference type="GO" id="GO:0031262">
    <property type="term" value="C:Ndc80 complex"/>
    <property type="evidence" value="ECO:0000314"/>
    <property type="project" value="PomBase"/>
</dbReference>
<dbReference type="GO" id="GO:0005634">
    <property type="term" value="C:nucleus"/>
    <property type="evidence" value="ECO:0000305"/>
    <property type="project" value="PomBase"/>
</dbReference>
<dbReference type="GO" id="GO:0000940">
    <property type="term" value="C:outer kinetochore"/>
    <property type="evidence" value="ECO:0000314"/>
    <property type="project" value="PomBase"/>
</dbReference>
<dbReference type="GO" id="GO:0008608">
    <property type="term" value="P:attachment of spindle microtubules to kinetochore"/>
    <property type="evidence" value="ECO:0000303"/>
    <property type="project" value="ComplexPortal"/>
</dbReference>
<dbReference type="GO" id="GO:0051301">
    <property type="term" value="P:cell division"/>
    <property type="evidence" value="ECO:0007669"/>
    <property type="project" value="UniProtKB-KW"/>
</dbReference>
<dbReference type="GO" id="GO:0007059">
    <property type="term" value="P:chromosome segregation"/>
    <property type="evidence" value="ECO:0000318"/>
    <property type="project" value="GO_Central"/>
</dbReference>
<dbReference type="GO" id="GO:1990571">
    <property type="term" value="P:meiotic centromere clustering"/>
    <property type="evidence" value="ECO:0000269"/>
    <property type="project" value="PomBase"/>
</dbReference>
<dbReference type="GO" id="GO:0000070">
    <property type="term" value="P:mitotic sister chromatid segregation"/>
    <property type="evidence" value="ECO:0000305"/>
    <property type="project" value="PomBase"/>
</dbReference>
<dbReference type="GO" id="GO:0051455">
    <property type="term" value="P:spindle attachment to meiosis I kinetochore"/>
    <property type="evidence" value="ECO:0000305"/>
    <property type="project" value="PomBase"/>
</dbReference>
<dbReference type="CDD" id="cd23784">
    <property type="entry name" value="RWD_Spc25"/>
    <property type="match status" value="1"/>
</dbReference>
<dbReference type="FunFam" id="3.30.457.50:FF:000001">
    <property type="entry name" value="Probable kinetochore protein spc25"/>
    <property type="match status" value="1"/>
</dbReference>
<dbReference type="Gene3D" id="3.30.457.50">
    <property type="entry name" value="Chromosome segregation protein Spc25"/>
    <property type="match status" value="1"/>
</dbReference>
<dbReference type="InterPro" id="IPR045143">
    <property type="entry name" value="Spc25"/>
</dbReference>
<dbReference type="InterPro" id="IPR013255">
    <property type="entry name" value="Spc25_C"/>
</dbReference>
<dbReference type="PANTHER" id="PTHR14281:SF0">
    <property type="entry name" value="KINETOCHORE PROTEIN SPC25"/>
    <property type="match status" value="1"/>
</dbReference>
<dbReference type="PANTHER" id="PTHR14281">
    <property type="entry name" value="KINETOCHORE PROTEIN SPC25-RELATED"/>
    <property type="match status" value="1"/>
</dbReference>
<dbReference type="Pfam" id="PF08234">
    <property type="entry name" value="Spindle_Spc25"/>
    <property type="match status" value="1"/>
</dbReference>
<evidence type="ECO:0000250" key="1">
    <source>
        <dbReference type="UniProtKB" id="P40014"/>
    </source>
</evidence>
<evidence type="ECO:0000255" key="2"/>
<evidence type="ECO:0000269" key="3">
    <source>
    </source>
</evidence>
<evidence type="ECO:0000269" key="4">
    <source>
    </source>
</evidence>
<evidence type="ECO:0000269" key="5">
    <source>
    </source>
</evidence>
<evidence type="ECO:0000269" key="6">
    <source>
    </source>
</evidence>
<evidence type="ECO:0000305" key="7"/>
<protein>
    <recommendedName>
        <fullName>Kinetochore protein spc25</fullName>
    </recommendedName>
</protein>
<sequence length="238" mass="28811">MSLANFPTIELDYDSLKSKISNFNSIFDRFLQEERKKLLNNKNEYLRQLSEINEAQKKAEKSLEQTEARKQNFTELLEKEHEEQAITEQEIFSFQEKLDAMLKRKQKLSEELDHYRAIISSKRELRAQEMEAKRKQDSYNNPELKFWEDYLGLKMEGVHDEVIRFIFTNIDEKDWNKQFSFQINLAERDYKVVHCHPPLPHVDDLVNKVNRTRDFYQFLKDMRKGFRELHRKDLSQLI</sequence>
<comment type="function">
    <text evidence="3">Acts as a component of the NMS (Ndc80-MIND-Spc7) super complex which has a role in kinetochore function during late meiotic prophase and throughout the mitotic cell cycle. Acts as a component of the essential kinetochore-associated NDC80 complex, which is required for chromosome segregation and spindle checkpoint activity.</text>
</comment>
<comment type="subunit">
    <text evidence="4 6">Component of the NDC80 complex, which consists of ndc80, nuf2, spc24 and spc25. Can self-associate. Component of the NMS super complex which consists of mis12, mis13, mis14, ndc80, nnf1, nuf2, sos7, spc7, spc24 and spc25.</text>
</comment>
<comment type="subcellular location">
    <subcellularLocation>
        <location evidence="3">Nucleus</location>
    </subcellularLocation>
    <subcellularLocation>
        <location evidence="3 5">Chromosome</location>
        <location evidence="3 5">Centromere</location>
        <location evidence="3 5">Kinetochore</location>
    </subcellularLocation>
    <text evidence="1">Associated with kinetochores.</text>
</comment>
<comment type="similarity">
    <text evidence="7">Belongs to the SPC25 family.</text>
</comment>
<keyword id="KW-0131">Cell cycle</keyword>
<keyword id="KW-0132">Cell division</keyword>
<keyword id="KW-0137">Centromere</keyword>
<keyword id="KW-0158">Chromosome</keyword>
<keyword id="KW-0175">Coiled coil</keyword>
<keyword id="KW-0995">Kinetochore</keyword>
<keyword id="KW-0469">Meiosis</keyword>
<keyword id="KW-0498">Mitosis</keyword>
<keyword id="KW-0539">Nucleus</keyword>
<keyword id="KW-1185">Reference proteome</keyword>
<feature type="chain" id="PRO_0000116881" description="Kinetochore protein spc25">
    <location>
        <begin position="1"/>
        <end position="238"/>
    </location>
</feature>
<feature type="coiled-coil region" evidence="2">
    <location>
        <begin position="28"/>
        <end position="141"/>
    </location>
</feature>
<accession>Q10430</accession>
<reference key="1">
    <citation type="journal article" date="2002" name="Nature">
        <title>The genome sequence of Schizosaccharomyces pombe.</title>
        <authorList>
            <person name="Wood V."/>
            <person name="Gwilliam R."/>
            <person name="Rajandream M.A."/>
            <person name="Lyne M.H."/>
            <person name="Lyne R."/>
            <person name="Stewart A."/>
            <person name="Sgouros J.G."/>
            <person name="Peat N."/>
            <person name="Hayles J."/>
            <person name="Baker S.G."/>
            <person name="Basham D."/>
            <person name="Bowman S."/>
            <person name="Brooks K."/>
            <person name="Brown D."/>
            <person name="Brown S."/>
            <person name="Chillingworth T."/>
            <person name="Churcher C.M."/>
            <person name="Collins M."/>
            <person name="Connor R."/>
            <person name="Cronin A."/>
            <person name="Davis P."/>
            <person name="Feltwell T."/>
            <person name="Fraser A."/>
            <person name="Gentles S."/>
            <person name="Goble A."/>
            <person name="Hamlin N."/>
            <person name="Harris D.E."/>
            <person name="Hidalgo J."/>
            <person name="Hodgson G."/>
            <person name="Holroyd S."/>
            <person name="Hornsby T."/>
            <person name="Howarth S."/>
            <person name="Huckle E.J."/>
            <person name="Hunt S."/>
            <person name="Jagels K."/>
            <person name="James K.D."/>
            <person name="Jones L."/>
            <person name="Jones M."/>
            <person name="Leather S."/>
            <person name="McDonald S."/>
            <person name="McLean J."/>
            <person name="Mooney P."/>
            <person name="Moule S."/>
            <person name="Mungall K.L."/>
            <person name="Murphy L.D."/>
            <person name="Niblett D."/>
            <person name="Odell C."/>
            <person name="Oliver K."/>
            <person name="O'Neil S."/>
            <person name="Pearson D."/>
            <person name="Quail M.A."/>
            <person name="Rabbinowitsch E."/>
            <person name="Rutherford K.M."/>
            <person name="Rutter S."/>
            <person name="Saunders D."/>
            <person name="Seeger K."/>
            <person name="Sharp S."/>
            <person name="Skelton J."/>
            <person name="Simmonds M.N."/>
            <person name="Squares R."/>
            <person name="Squares S."/>
            <person name="Stevens K."/>
            <person name="Taylor K."/>
            <person name="Taylor R.G."/>
            <person name="Tivey A."/>
            <person name="Walsh S.V."/>
            <person name="Warren T."/>
            <person name="Whitehead S."/>
            <person name="Woodward J.R."/>
            <person name="Volckaert G."/>
            <person name="Aert R."/>
            <person name="Robben J."/>
            <person name="Grymonprez B."/>
            <person name="Weltjens I."/>
            <person name="Vanstreels E."/>
            <person name="Rieger M."/>
            <person name="Schaefer M."/>
            <person name="Mueller-Auer S."/>
            <person name="Gabel C."/>
            <person name="Fuchs M."/>
            <person name="Duesterhoeft A."/>
            <person name="Fritzc C."/>
            <person name="Holzer E."/>
            <person name="Moestl D."/>
            <person name="Hilbert H."/>
            <person name="Borzym K."/>
            <person name="Langer I."/>
            <person name="Beck A."/>
            <person name="Lehrach H."/>
            <person name="Reinhardt R."/>
            <person name="Pohl T.M."/>
            <person name="Eger P."/>
            <person name="Zimmermann W."/>
            <person name="Wedler H."/>
            <person name="Wambutt R."/>
            <person name="Purnelle B."/>
            <person name="Goffeau A."/>
            <person name="Cadieu E."/>
            <person name="Dreano S."/>
            <person name="Gloux S."/>
            <person name="Lelaure V."/>
            <person name="Mottier S."/>
            <person name="Galibert F."/>
            <person name="Aves S.J."/>
            <person name="Xiang Z."/>
            <person name="Hunt C."/>
            <person name="Moore K."/>
            <person name="Hurst S.M."/>
            <person name="Lucas M."/>
            <person name="Rochet M."/>
            <person name="Gaillardin C."/>
            <person name="Tallada V.A."/>
            <person name="Garzon A."/>
            <person name="Thode G."/>
            <person name="Daga R.R."/>
            <person name="Cruzado L."/>
            <person name="Jimenez J."/>
            <person name="Sanchez M."/>
            <person name="del Rey F."/>
            <person name="Benito J."/>
            <person name="Dominguez A."/>
            <person name="Revuelta J.L."/>
            <person name="Moreno S."/>
            <person name="Armstrong J."/>
            <person name="Forsburg S.L."/>
            <person name="Cerutti L."/>
            <person name="Lowe T."/>
            <person name="McCombie W.R."/>
            <person name="Paulsen I."/>
            <person name="Potashkin J."/>
            <person name="Shpakovski G.V."/>
            <person name="Ussery D."/>
            <person name="Barrell B.G."/>
            <person name="Nurse P."/>
        </authorList>
    </citation>
    <scope>NUCLEOTIDE SEQUENCE [LARGE SCALE GENOMIC DNA]</scope>
    <source>
        <strain>972 / ATCC 24843</strain>
    </source>
</reference>
<reference key="2">
    <citation type="journal article" date="2005" name="EMBO J.">
        <title>Molecular analysis of kinetochore architecture in fission yeast.</title>
        <authorList>
            <person name="Liu X."/>
            <person name="McLeod I."/>
            <person name="Anderson S."/>
            <person name="Yates J.R. III"/>
            <person name="He X."/>
        </authorList>
    </citation>
    <scope>IDENTIFICATION IN THE NDC80 COMPLEX</scope>
    <scope>IDENTIFICATION IN THE NMS COMPLEX</scope>
</reference>
<reference key="3">
    <citation type="journal article" date="2005" name="Mol. Biol. Cell">
        <title>Dissociation of the Nuf2-Ndc80 complex releases centromeres from the spindle-pole body during meiotic prophase in fission yeast.</title>
        <authorList>
            <person name="Asakawa H."/>
            <person name="Hayashi A."/>
            <person name="Haraguchi T."/>
            <person name="Hiraoka Y."/>
        </authorList>
    </citation>
    <scope>FUNCTION OF THE NDC80 COMPLEX</scope>
    <scope>INTERACTION WITH NDC80 AND SPC24</scope>
    <scope>SUBCELLULAR LOCATION</scope>
</reference>
<reference key="4">
    <citation type="journal article" date="2006" name="Mol. Biol. Cell">
        <title>Reconstruction of the kinetochore during meiosis in fission yeast Schizosaccharomyces pombe.</title>
        <authorList>
            <person name="Hayashi A."/>
            <person name="Asakawa H."/>
            <person name="Haraguchi T."/>
            <person name="Hiraoka Y."/>
        </authorList>
    </citation>
    <scope>IDENTIFICATION IN THE NMS COMPLEX</scope>
</reference>
<reference key="5">
    <citation type="journal article" date="2006" name="Nat. Biotechnol.">
        <title>ORFeome cloning and global analysis of protein localization in the fission yeast Schizosaccharomyces pombe.</title>
        <authorList>
            <person name="Matsuyama A."/>
            <person name="Arai R."/>
            <person name="Yashiroda Y."/>
            <person name="Shirai A."/>
            <person name="Kamata A."/>
            <person name="Sekido S."/>
            <person name="Kobayashi Y."/>
            <person name="Hashimoto A."/>
            <person name="Hamamoto M."/>
            <person name="Hiraoka Y."/>
            <person name="Horinouchi S."/>
            <person name="Yoshida M."/>
        </authorList>
    </citation>
    <scope>SUBCELLULAR LOCATION [LARGE SCALE ANALYSIS]</scope>
</reference>
<proteinExistence type="evidence at protein level"/>
<gene>
    <name type="primary">spc25</name>
    <name type="ORF">SPCC188.04c</name>
</gene>
<organism>
    <name type="scientific">Schizosaccharomyces pombe (strain 972 / ATCC 24843)</name>
    <name type="common">Fission yeast</name>
    <dbReference type="NCBI Taxonomy" id="284812"/>
    <lineage>
        <taxon>Eukaryota</taxon>
        <taxon>Fungi</taxon>
        <taxon>Dikarya</taxon>
        <taxon>Ascomycota</taxon>
        <taxon>Taphrinomycotina</taxon>
        <taxon>Schizosaccharomycetes</taxon>
        <taxon>Schizosaccharomycetales</taxon>
        <taxon>Schizosaccharomycetaceae</taxon>
        <taxon>Schizosaccharomyces</taxon>
    </lineage>
</organism>
<name>SPC25_SCHPO</name>